<keyword id="KW-0064">Aspartyl protease</keyword>
<keyword id="KW-0997">Cell inner membrane</keyword>
<keyword id="KW-1003">Cell membrane</keyword>
<keyword id="KW-0378">Hydrolase</keyword>
<keyword id="KW-0472">Membrane</keyword>
<keyword id="KW-0645">Protease</keyword>
<keyword id="KW-1185">Reference proteome</keyword>
<keyword id="KW-0812">Transmembrane</keyword>
<keyword id="KW-1133">Transmembrane helix</keyword>
<protein>
    <recommendedName>
        <fullName evidence="1">Lipoprotein signal peptidase</fullName>
        <ecNumber evidence="1">3.4.23.36</ecNumber>
    </recommendedName>
    <alternativeName>
        <fullName evidence="1">Prolipoprotein signal peptidase</fullName>
    </alternativeName>
    <alternativeName>
        <fullName evidence="1">Signal peptidase II</fullName>
        <shortName evidence="1">SPase II</shortName>
    </alternativeName>
</protein>
<proteinExistence type="inferred from homology"/>
<comment type="function">
    <text evidence="1">This protein specifically catalyzes the removal of signal peptides from prolipoproteins.</text>
</comment>
<comment type="catalytic activity">
    <reaction evidence="1">
        <text>Release of signal peptides from bacterial membrane prolipoproteins. Hydrolyzes -Xaa-Yaa-Zaa-|-(S,diacylglyceryl)Cys-, in which Xaa is hydrophobic (preferably Leu), and Yaa (Ala or Ser) and Zaa (Gly or Ala) have small, neutral side chains.</text>
        <dbReference type="EC" id="3.4.23.36"/>
    </reaction>
</comment>
<comment type="pathway">
    <text evidence="1">Protein modification; lipoprotein biosynthesis (signal peptide cleavage).</text>
</comment>
<comment type="subcellular location">
    <subcellularLocation>
        <location evidence="1">Cell inner membrane</location>
        <topology evidence="1">Multi-pass membrane protein</topology>
    </subcellularLocation>
</comment>
<comment type="similarity">
    <text evidence="1 2">Belongs to the peptidase A8 family.</text>
</comment>
<comment type="caution">
    <text evidence="3">Was originally thought to be related to urease function.</text>
</comment>
<organism>
    <name type="scientific">Helicobacter pylori (strain ATCC 700392 / 26695)</name>
    <name type="common">Campylobacter pylori</name>
    <dbReference type="NCBI Taxonomy" id="85962"/>
    <lineage>
        <taxon>Bacteria</taxon>
        <taxon>Pseudomonadati</taxon>
        <taxon>Campylobacterota</taxon>
        <taxon>Epsilonproteobacteria</taxon>
        <taxon>Campylobacterales</taxon>
        <taxon>Helicobacteraceae</taxon>
        <taxon>Helicobacter</taxon>
    </lineage>
</organism>
<accession>P25178</accession>
<evidence type="ECO:0000255" key="1">
    <source>
        <dbReference type="HAMAP-Rule" id="MF_00161"/>
    </source>
</evidence>
<evidence type="ECO:0000305" key="2"/>
<evidence type="ECO:0000305" key="3">
    <source>
    </source>
</evidence>
<reference key="1">
    <citation type="journal article" date="1991" name="J. Bacteriol.">
        <title>Shuttle cloning and nucleotide sequences of Helicobacter pylori genes responsible for urease activity.</title>
        <authorList>
            <person name="Labigne A."/>
            <person name="Cussac V."/>
            <person name="Courcoux P."/>
        </authorList>
    </citation>
    <scope>NUCLEOTIDE SEQUENCE [GENOMIC DNA]</scope>
    <source>
        <strain>85P</strain>
    </source>
</reference>
<reference key="2">
    <citation type="journal article" date="1997" name="Nature">
        <title>The complete genome sequence of the gastric pathogen Helicobacter pylori.</title>
        <authorList>
            <person name="Tomb J.-F."/>
            <person name="White O."/>
            <person name="Kerlavage A.R."/>
            <person name="Clayton R.A."/>
            <person name="Sutton G.G."/>
            <person name="Fleischmann R.D."/>
            <person name="Ketchum K.A."/>
            <person name="Klenk H.-P."/>
            <person name="Gill S.R."/>
            <person name="Dougherty B.A."/>
            <person name="Nelson K.E."/>
            <person name="Quackenbush J."/>
            <person name="Zhou L."/>
            <person name="Kirkness E.F."/>
            <person name="Peterson S.N."/>
            <person name="Loftus B.J."/>
            <person name="Richardson D.L."/>
            <person name="Dodson R.J."/>
            <person name="Khalak H.G."/>
            <person name="Glodek A."/>
            <person name="McKenney K."/>
            <person name="FitzGerald L.M."/>
            <person name="Lee N."/>
            <person name="Adams M.D."/>
            <person name="Hickey E.K."/>
            <person name="Berg D.E."/>
            <person name="Gocayne J.D."/>
            <person name="Utterback T.R."/>
            <person name="Peterson J.D."/>
            <person name="Kelley J.M."/>
            <person name="Cotton M.D."/>
            <person name="Weidman J.F."/>
            <person name="Fujii C."/>
            <person name="Bowman C."/>
            <person name="Watthey L."/>
            <person name="Wallin E."/>
            <person name="Hayes W.S."/>
            <person name="Borodovsky M."/>
            <person name="Karp P.D."/>
            <person name="Smith H.O."/>
            <person name="Fraser C.M."/>
            <person name="Venter J.C."/>
        </authorList>
    </citation>
    <scope>NUCLEOTIDE SEQUENCE [LARGE SCALE GENOMIC DNA]</scope>
    <source>
        <strain>ATCC 700392 / 26695</strain>
    </source>
</reference>
<gene>
    <name evidence="1" type="primary">lspA</name>
    <name type="synonym">ureD</name>
    <name type="ordered locus">HP_0074</name>
</gene>
<name>LSPA_HELPY</name>
<dbReference type="EC" id="3.4.23.36" evidence="1"/>
<dbReference type="EMBL" id="M60398">
    <property type="protein sequence ID" value="AAA25019.1"/>
    <property type="molecule type" value="Genomic_DNA"/>
</dbReference>
<dbReference type="EMBL" id="AE000511">
    <property type="protein sequence ID" value="AAD07145.1"/>
    <property type="molecule type" value="Genomic_DNA"/>
</dbReference>
<dbReference type="PIR" id="B64529">
    <property type="entry name" value="B64529"/>
</dbReference>
<dbReference type="RefSeq" id="NP_206874.1">
    <property type="nucleotide sequence ID" value="NC_000915.1"/>
</dbReference>
<dbReference type="RefSeq" id="WP_000921378.1">
    <property type="nucleotide sequence ID" value="NC_018939.1"/>
</dbReference>
<dbReference type="SMR" id="P25178"/>
<dbReference type="IntAct" id="P25178">
    <property type="interactions" value="3"/>
</dbReference>
<dbReference type="STRING" id="85962.HP_0074"/>
<dbReference type="PaxDb" id="85962-C694_00360"/>
<dbReference type="EnsemblBacteria" id="AAD07145">
    <property type="protein sequence ID" value="AAD07145"/>
    <property type="gene ID" value="HP_0074"/>
</dbReference>
<dbReference type="KEGG" id="heo:C694_00360"/>
<dbReference type="KEGG" id="hpy:HP_0074"/>
<dbReference type="PATRIC" id="fig|85962.47.peg.78"/>
<dbReference type="eggNOG" id="COG0597">
    <property type="taxonomic scope" value="Bacteria"/>
</dbReference>
<dbReference type="InParanoid" id="P25178"/>
<dbReference type="OrthoDB" id="9810259at2"/>
<dbReference type="UniPathway" id="UPA00665"/>
<dbReference type="Proteomes" id="UP000000429">
    <property type="component" value="Chromosome"/>
</dbReference>
<dbReference type="GO" id="GO:0005886">
    <property type="term" value="C:plasma membrane"/>
    <property type="evidence" value="ECO:0000318"/>
    <property type="project" value="GO_Central"/>
</dbReference>
<dbReference type="GO" id="GO:0004190">
    <property type="term" value="F:aspartic-type endopeptidase activity"/>
    <property type="evidence" value="ECO:0007669"/>
    <property type="project" value="UniProtKB-UniRule"/>
</dbReference>
<dbReference type="GO" id="GO:0004175">
    <property type="term" value="F:endopeptidase activity"/>
    <property type="evidence" value="ECO:0000318"/>
    <property type="project" value="GO_Central"/>
</dbReference>
<dbReference type="GO" id="GO:0006508">
    <property type="term" value="P:proteolysis"/>
    <property type="evidence" value="ECO:0007669"/>
    <property type="project" value="UniProtKB-KW"/>
</dbReference>
<dbReference type="HAMAP" id="MF_00161">
    <property type="entry name" value="LspA"/>
    <property type="match status" value="1"/>
</dbReference>
<dbReference type="InterPro" id="IPR001872">
    <property type="entry name" value="Peptidase_A8"/>
</dbReference>
<dbReference type="NCBIfam" id="TIGR00077">
    <property type="entry name" value="lspA"/>
    <property type="match status" value="1"/>
</dbReference>
<dbReference type="PANTHER" id="PTHR33695">
    <property type="entry name" value="LIPOPROTEIN SIGNAL PEPTIDASE"/>
    <property type="match status" value="1"/>
</dbReference>
<dbReference type="PANTHER" id="PTHR33695:SF1">
    <property type="entry name" value="LIPOPROTEIN SIGNAL PEPTIDASE"/>
    <property type="match status" value="1"/>
</dbReference>
<dbReference type="Pfam" id="PF01252">
    <property type="entry name" value="Peptidase_A8"/>
    <property type="match status" value="1"/>
</dbReference>
<dbReference type="PRINTS" id="PR00781">
    <property type="entry name" value="LIPOSIGPTASE"/>
</dbReference>
<dbReference type="PROSITE" id="PS00855">
    <property type="entry name" value="SPASE_II"/>
    <property type="match status" value="1"/>
</dbReference>
<feature type="chain" id="PRO_0000178784" description="Lipoprotein signal peptidase">
    <location>
        <begin position="1"/>
        <end position="157"/>
    </location>
</feature>
<feature type="transmembrane region" description="Helical" evidence="1">
    <location>
        <begin position="10"/>
        <end position="30"/>
    </location>
</feature>
<feature type="transmembrane region" description="Helical" evidence="1">
    <location>
        <begin position="58"/>
        <end position="78"/>
    </location>
</feature>
<feature type="transmembrane region" description="Helical" evidence="1">
    <location>
        <begin position="84"/>
        <end position="104"/>
    </location>
</feature>
<feature type="transmembrane region" description="Helical" evidence="1">
    <location>
        <begin position="122"/>
        <end position="142"/>
    </location>
</feature>
<feature type="active site" evidence="1">
    <location>
        <position position="114"/>
    </location>
</feature>
<feature type="active site" evidence="1">
    <location>
        <position position="131"/>
    </location>
</feature>
<feature type="sequence conflict" description="In Ref. 1; AAA25019." evidence="2" ref="1">
    <original>M</original>
    <variation>I</variation>
    <location>
        <position position="13"/>
    </location>
</feature>
<feature type="sequence conflict" description="In Ref. 1; AAA25019." evidence="2" ref="1">
    <original>M</original>
    <variation>V</variation>
    <location>
        <position position="40"/>
    </location>
</feature>
<feature type="sequence conflict" description="In Ref. 1; AAA25019." evidence="2" ref="1">
    <original>FAIFNFADVMIDVGVGVLLLKQFFFKQKQNKIKA</original>
    <variation>LPFLTSLMS</variation>
    <location>
        <begin position="124"/>
        <end position="157"/>
    </location>
</feature>
<sequence length="157" mass="17998">MLKTTKKSLLVFMGVFFLIFGVDQAIKYAILEGFRYESLMIDIVLVFNKGVAFSLLSFLEGGLKYLQILLILGLFIFLMRQRELFKNHAIEFGMVFGAGVSNVLDRFVHGGVVDYVYYHYGFDFAIFNFADVMIDVGVGVLLLKQFFFKQKQNKIKA</sequence>